<evidence type="ECO:0000255" key="1">
    <source>
        <dbReference type="HAMAP-Rule" id="MF_00191"/>
    </source>
</evidence>
<accession>Q67QZ8</accession>
<sequence>MEVIKITPRGYCHGVVGAIQLVRRVARDPNVPRPIYVLGQIVHNRHVVEEMEALGVITLDGEDRLSLLEKIDAGTVIFTAHGVSPAVKIRAREKGLYVVDATCPDVTRTHELIAELVSRGYEVIYIGKKGHPEPEGAVGVAPGHVHLVERAEDLEALSFAPGQKLAVTNQTTLSQWDTQALMEQVKARWPQTEIYNEICLATQQRQEAVARMAPEADLVIVVGDRRSNNSNRLVQVAQELAAREAHLVDSVEEIDPAWLKGKRKVAVTSGASTPTHITRAVIEFLEKYNVEVEER</sequence>
<gene>
    <name evidence="1" type="primary">ispH</name>
    <name type="ordered locus">STH910</name>
</gene>
<comment type="function">
    <text evidence="1">Catalyzes the conversion of 1-hydroxy-2-methyl-2-(E)-butenyl 4-diphosphate (HMBPP) into a mixture of isopentenyl diphosphate (IPP) and dimethylallyl diphosphate (DMAPP). Acts in the terminal step of the DOXP/MEP pathway for isoprenoid precursor biosynthesis.</text>
</comment>
<comment type="catalytic activity">
    <reaction evidence="1">
        <text>isopentenyl diphosphate + 2 oxidized [2Fe-2S]-[ferredoxin] + H2O = (2E)-4-hydroxy-3-methylbut-2-enyl diphosphate + 2 reduced [2Fe-2S]-[ferredoxin] + 2 H(+)</text>
        <dbReference type="Rhea" id="RHEA:24488"/>
        <dbReference type="Rhea" id="RHEA-COMP:10000"/>
        <dbReference type="Rhea" id="RHEA-COMP:10001"/>
        <dbReference type="ChEBI" id="CHEBI:15377"/>
        <dbReference type="ChEBI" id="CHEBI:15378"/>
        <dbReference type="ChEBI" id="CHEBI:33737"/>
        <dbReference type="ChEBI" id="CHEBI:33738"/>
        <dbReference type="ChEBI" id="CHEBI:128753"/>
        <dbReference type="ChEBI" id="CHEBI:128769"/>
        <dbReference type="EC" id="1.17.7.4"/>
    </reaction>
</comment>
<comment type="catalytic activity">
    <reaction evidence="1">
        <text>dimethylallyl diphosphate + 2 oxidized [2Fe-2S]-[ferredoxin] + H2O = (2E)-4-hydroxy-3-methylbut-2-enyl diphosphate + 2 reduced [2Fe-2S]-[ferredoxin] + 2 H(+)</text>
        <dbReference type="Rhea" id="RHEA:24825"/>
        <dbReference type="Rhea" id="RHEA-COMP:10000"/>
        <dbReference type="Rhea" id="RHEA-COMP:10001"/>
        <dbReference type="ChEBI" id="CHEBI:15377"/>
        <dbReference type="ChEBI" id="CHEBI:15378"/>
        <dbReference type="ChEBI" id="CHEBI:33737"/>
        <dbReference type="ChEBI" id="CHEBI:33738"/>
        <dbReference type="ChEBI" id="CHEBI:57623"/>
        <dbReference type="ChEBI" id="CHEBI:128753"/>
        <dbReference type="EC" id="1.17.7.4"/>
    </reaction>
</comment>
<comment type="cofactor">
    <cofactor evidence="1">
        <name>[4Fe-4S] cluster</name>
        <dbReference type="ChEBI" id="CHEBI:49883"/>
    </cofactor>
    <text evidence="1">Binds 1 [4Fe-4S] cluster per subunit.</text>
</comment>
<comment type="pathway">
    <text evidence="1">Isoprenoid biosynthesis; dimethylallyl diphosphate biosynthesis; dimethylallyl diphosphate from (2E)-4-hydroxy-3-methylbutenyl diphosphate: step 1/1.</text>
</comment>
<comment type="pathway">
    <text evidence="1">Isoprenoid biosynthesis; isopentenyl diphosphate biosynthesis via DXP pathway; isopentenyl diphosphate from 1-deoxy-D-xylulose 5-phosphate: step 6/6.</text>
</comment>
<comment type="similarity">
    <text evidence="1">Belongs to the IspH family.</text>
</comment>
<feature type="chain" id="PRO_0000128876" description="4-hydroxy-3-methylbut-2-enyl diphosphate reductase">
    <location>
        <begin position="1"/>
        <end position="295"/>
    </location>
</feature>
<feature type="active site" description="Proton donor" evidence="1">
    <location>
        <position position="133"/>
    </location>
</feature>
<feature type="binding site" evidence="1">
    <location>
        <position position="12"/>
    </location>
    <ligand>
        <name>[4Fe-4S] cluster</name>
        <dbReference type="ChEBI" id="CHEBI:49883"/>
    </ligand>
</feature>
<feature type="binding site" evidence="1">
    <location>
        <position position="43"/>
    </location>
    <ligand>
        <name>(2E)-4-hydroxy-3-methylbut-2-enyl diphosphate</name>
        <dbReference type="ChEBI" id="CHEBI:128753"/>
    </ligand>
</feature>
<feature type="binding site" evidence="1">
    <location>
        <position position="43"/>
    </location>
    <ligand>
        <name>dimethylallyl diphosphate</name>
        <dbReference type="ChEBI" id="CHEBI:57623"/>
    </ligand>
</feature>
<feature type="binding site" evidence="1">
    <location>
        <position position="43"/>
    </location>
    <ligand>
        <name>isopentenyl diphosphate</name>
        <dbReference type="ChEBI" id="CHEBI:128769"/>
    </ligand>
</feature>
<feature type="binding site" evidence="1">
    <location>
        <position position="81"/>
    </location>
    <ligand>
        <name>(2E)-4-hydroxy-3-methylbut-2-enyl diphosphate</name>
        <dbReference type="ChEBI" id="CHEBI:128753"/>
    </ligand>
</feature>
<feature type="binding site" evidence="1">
    <location>
        <position position="81"/>
    </location>
    <ligand>
        <name>dimethylallyl diphosphate</name>
        <dbReference type="ChEBI" id="CHEBI:57623"/>
    </ligand>
</feature>
<feature type="binding site" evidence="1">
    <location>
        <position position="81"/>
    </location>
    <ligand>
        <name>isopentenyl diphosphate</name>
        <dbReference type="ChEBI" id="CHEBI:128769"/>
    </ligand>
</feature>
<feature type="binding site" evidence="1">
    <location>
        <position position="103"/>
    </location>
    <ligand>
        <name>[4Fe-4S] cluster</name>
        <dbReference type="ChEBI" id="CHEBI:49883"/>
    </ligand>
</feature>
<feature type="binding site" evidence="1">
    <location>
        <position position="131"/>
    </location>
    <ligand>
        <name>(2E)-4-hydroxy-3-methylbut-2-enyl diphosphate</name>
        <dbReference type="ChEBI" id="CHEBI:128753"/>
    </ligand>
</feature>
<feature type="binding site" evidence="1">
    <location>
        <position position="131"/>
    </location>
    <ligand>
        <name>dimethylallyl diphosphate</name>
        <dbReference type="ChEBI" id="CHEBI:57623"/>
    </ligand>
</feature>
<feature type="binding site" evidence="1">
    <location>
        <position position="131"/>
    </location>
    <ligand>
        <name>isopentenyl diphosphate</name>
        <dbReference type="ChEBI" id="CHEBI:128769"/>
    </ligand>
</feature>
<feature type="binding site" evidence="1">
    <location>
        <position position="171"/>
    </location>
    <ligand>
        <name>(2E)-4-hydroxy-3-methylbut-2-enyl diphosphate</name>
        <dbReference type="ChEBI" id="CHEBI:128753"/>
    </ligand>
</feature>
<feature type="binding site" evidence="1">
    <location>
        <position position="199"/>
    </location>
    <ligand>
        <name>[4Fe-4S] cluster</name>
        <dbReference type="ChEBI" id="CHEBI:49883"/>
    </ligand>
</feature>
<feature type="binding site" evidence="1">
    <location>
        <position position="227"/>
    </location>
    <ligand>
        <name>(2E)-4-hydroxy-3-methylbut-2-enyl diphosphate</name>
        <dbReference type="ChEBI" id="CHEBI:128753"/>
    </ligand>
</feature>
<feature type="binding site" evidence="1">
    <location>
        <position position="227"/>
    </location>
    <ligand>
        <name>dimethylallyl diphosphate</name>
        <dbReference type="ChEBI" id="CHEBI:57623"/>
    </ligand>
</feature>
<feature type="binding site" evidence="1">
    <location>
        <position position="227"/>
    </location>
    <ligand>
        <name>isopentenyl diphosphate</name>
        <dbReference type="ChEBI" id="CHEBI:128769"/>
    </ligand>
</feature>
<feature type="binding site" evidence="1">
    <location>
        <position position="229"/>
    </location>
    <ligand>
        <name>(2E)-4-hydroxy-3-methylbut-2-enyl diphosphate</name>
        <dbReference type="ChEBI" id="CHEBI:128753"/>
    </ligand>
</feature>
<feature type="binding site" evidence="1">
    <location>
        <position position="229"/>
    </location>
    <ligand>
        <name>dimethylallyl diphosphate</name>
        <dbReference type="ChEBI" id="CHEBI:57623"/>
    </ligand>
</feature>
<feature type="binding site" evidence="1">
    <location>
        <position position="229"/>
    </location>
    <ligand>
        <name>isopentenyl diphosphate</name>
        <dbReference type="ChEBI" id="CHEBI:128769"/>
    </ligand>
</feature>
<feature type="binding site" evidence="1">
    <location>
        <position position="272"/>
    </location>
    <ligand>
        <name>(2E)-4-hydroxy-3-methylbut-2-enyl diphosphate</name>
        <dbReference type="ChEBI" id="CHEBI:128753"/>
    </ligand>
</feature>
<feature type="binding site" evidence="1">
    <location>
        <position position="272"/>
    </location>
    <ligand>
        <name>dimethylallyl diphosphate</name>
        <dbReference type="ChEBI" id="CHEBI:57623"/>
    </ligand>
</feature>
<feature type="binding site" evidence="1">
    <location>
        <position position="272"/>
    </location>
    <ligand>
        <name>isopentenyl diphosphate</name>
        <dbReference type="ChEBI" id="CHEBI:128769"/>
    </ligand>
</feature>
<protein>
    <recommendedName>
        <fullName evidence="1">4-hydroxy-3-methylbut-2-enyl diphosphate reductase</fullName>
        <shortName evidence="1">HMBPP reductase</shortName>
        <ecNumber evidence="1">1.17.7.4</ecNumber>
    </recommendedName>
</protein>
<proteinExistence type="inferred from homology"/>
<dbReference type="EC" id="1.17.7.4" evidence="1"/>
<dbReference type="EMBL" id="AP006840">
    <property type="protein sequence ID" value="BAD39895.1"/>
    <property type="molecule type" value="Genomic_DNA"/>
</dbReference>
<dbReference type="RefSeq" id="WP_011195042.1">
    <property type="nucleotide sequence ID" value="NC_006177.1"/>
</dbReference>
<dbReference type="SMR" id="Q67QZ8"/>
<dbReference type="STRING" id="292459.STH910"/>
<dbReference type="KEGG" id="sth:STH910"/>
<dbReference type="eggNOG" id="COG0761">
    <property type="taxonomic scope" value="Bacteria"/>
</dbReference>
<dbReference type="HOGENOM" id="CLU_027486_0_0_9"/>
<dbReference type="OrthoDB" id="9777362at2"/>
<dbReference type="UniPathway" id="UPA00056">
    <property type="reaction ID" value="UER00097"/>
</dbReference>
<dbReference type="UniPathway" id="UPA00059">
    <property type="reaction ID" value="UER00105"/>
</dbReference>
<dbReference type="Proteomes" id="UP000000417">
    <property type="component" value="Chromosome"/>
</dbReference>
<dbReference type="GO" id="GO:0051539">
    <property type="term" value="F:4 iron, 4 sulfur cluster binding"/>
    <property type="evidence" value="ECO:0007669"/>
    <property type="project" value="UniProtKB-UniRule"/>
</dbReference>
<dbReference type="GO" id="GO:0051745">
    <property type="term" value="F:4-hydroxy-3-methylbut-2-enyl diphosphate reductase activity"/>
    <property type="evidence" value="ECO:0007669"/>
    <property type="project" value="UniProtKB-UniRule"/>
</dbReference>
<dbReference type="GO" id="GO:0046872">
    <property type="term" value="F:metal ion binding"/>
    <property type="evidence" value="ECO:0007669"/>
    <property type="project" value="UniProtKB-KW"/>
</dbReference>
<dbReference type="GO" id="GO:0050992">
    <property type="term" value="P:dimethylallyl diphosphate biosynthetic process"/>
    <property type="evidence" value="ECO:0007669"/>
    <property type="project" value="UniProtKB-UniRule"/>
</dbReference>
<dbReference type="GO" id="GO:0019288">
    <property type="term" value="P:isopentenyl diphosphate biosynthetic process, methylerythritol 4-phosphate pathway"/>
    <property type="evidence" value="ECO:0007669"/>
    <property type="project" value="UniProtKB-UniRule"/>
</dbReference>
<dbReference type="GO" id="GO:0016114">
    <property type="term" value="P:terpenoid biosynthetic process"/>
    <property type="evidence" value="ECO:0007669"/>
    <property type="project" value="UniProtKB-UniRule"/>
</dbReference>
<dbReference type="CDD" id="cd13944">
    <property type="entry name" value="lytB_ispH"/>
    <property type="match status" value="1"/>
</dbReference>
<dbReference type="Gene3D" id="3.40.50.11270">
    <property type="match status" value="1"/>
</dbReference>
<dbReference type="Gene3D" id="3.40.1010.20">
    <property type="entry name" value="4-hydroxy-3-methylbut-2-enyl diphosphate reductase, catalytic domain"/>
    <property type="match status" value="2"/>
</dbReference>
<dbReference type="HAMAP" id="MF_00191">
    <property type="entry name" value="IspH"/>
    <property type="match status" value="1"/>
</dbReference>
<dbReference type="InterPro" id="IPR003451">
    <property type="entry name" value="LytB/IspH"/>
</dbReference>
<dbReference type="NCBIfam" id="TIGR00216">
    <property type="entry name" value="ispH_lytB"/>
    <property type="match status" value="1"/>
</dbReference>
<dbReference type="NCBIfam" id="NF002187">
    <property type="entry name" value="PRK01045.1-1"/>
    <property type="match status" value="1"/>
</dbReference>
<dbReference type="PANTHER" id="PTHR30426">
    <property type="entry name" value="4-HYDROXY-3-METHYLBUT-2-ENYL DIPHOSPHATE REDUCTASE"/>
    <property type="match status" value="1"/>
</dbReference>
<dbReference type="PANTHER" id="PTHR30426:SF0">
    <property type="entry name" value="4-HYDROXY-3-METHYLBUT-2-ENYL DIPHOSPHATE REDUCTASE"/>
    <property type="match status" value="1"/>
</dbReference>
<dbReference type="Pfam" id="PF02401">
    <property type="entry name" value="LYTB"/>
    <property type="match status" value="1"/>
</dbReference>
<organism>
    <name type="scientific">Symbiobacterium thermophilum (strain DSM 24528 / JCM 14929 / IAM 14863 / T)</name>
    <dbReference type="NCBI Taxonomy" id="292459"/>
    <lineage>
        <taxon>Bacteria</taxon>
        <taxon>Bacillati</taxon>
        <taxon>Bacillota</taxon>
        <taxon>Clostridia</taxon>
        <taxon>Eubacteriales</taxon>
        <taxon>Symbiobacteriaceae</taxon>
        <taxon>Symbiobacterium</taxon>
    </lineage>
</organism>
<reference key="1">
    <citation type="journal article" date="2004" name="Nucleic Acids Res.">
        <title>Genome sequence of Symbiobacterium thermophilum, an uncultivable bacterium that depends on microbial commensalism.</title>
        <authorList>
            <person name="Ueda K."/>
            <person name="Yamashita A."/>
            <person name="Ishikawa J."/>
            <person name="Shimada M."/>
            <person name="Watsuji T."/>
            <person name="Morimura K."/>
            <person name="Ikeda H."/>
            <person name="Hattori M."/>
            <person name="Beppu T."/>
        </authorList>
    </citation>
    <scope>NUCLEOTIDE SEQUENCE [LARGE SCALE GENOMIC DNA]</scope>
    <source>
        <strain>DSM 24528 / JCM 14929 / IAM 14863 / T</strain>
    </source>
</reference>
<keyword id="KW-0004">4Fe-4S</keyword>
<keyword id="KW-0408">Iron</keyword>
<keyword id="KW-0411">Iron-sulfur</keyword>
<keyword id="KW-0414">Isoprene biosynthesis</keyword>
<keyword id="KW-0479">Metal-binding</keyword>
<keyword id="KW-0560">Oxidoreductase</keyword>
<keyword id="KW-1185">Reference proteome</keyword>
<name>ISPH_SYMTH</name>